<accession>Q492K6</accession>
<proteinExistence type="inferred from homology"/>
<organism>
    <name type="scientific">Blochmanniella pennsylvanica (strain BPEN)</name>
    <dbReference type="NCBI Taxonomy" id="291272"/>
    <lineage>
        <taxon>Bacteria</taxon>
        <taxon>Pseudomonadati</taxon>
        <taxon>Pseudomonadota</taxon>
        <taxon>Gammaproteobacteria</taxon>
        <taxon>Enterobacterales</taxon>
        <taxon>Enterobacteriaceae</taxon>
        <taxon>ant endosymbionts</taxon>
        <taxon>Candidatus Blochmanniella</taxon>
    </lineage>
</organism>
<keyword id="KW-0175">Coiled coil</keyword>
<keyword id="KW-0963">Cytoplasm</keyword>
<keyword id="KW-1185">Reference proteome</keyword>
<comment type="function">
    <text evidence="1">Pole-localizer protein involved in the regulation of several cellular processes.</text>
</comment>
<comment type="subcellular location">
    <subcellularLocation>
        <location evidence="1">Cytoplasm</location>
    </subcellularLocation>
</comment>
<comment type="similarity">
    <text evidence="1">Belongs to the pole-localizer TmaR family.</text>
</comment>
<sequence length="107" mass="12915">MRDDVNQSFYDVLEFVRIFRRKNKLQREIVDNEKKIRDNQKRVLLLGDLSDYIKSETSIEGIQVIIANMRNDYEDRVDEYIIKNAELSKERRELSKKLKNFKESTID</sequence>
<protein>
    <recommendedName>
        <fullName evidence="1">Pole-localizer protein TmaR</fullName>
    </recommendedName>
</protein>
<gene>
    <name evidence="1" type="primary">tmaR</name>
    <name type="ordered locus">BPEN_475</name>
</gene>
<reference key="1">
    <citation type="journal article" date="2005" name="Genome Res.">
        <title>Genome sequence of Blochmannia pennsylvanicus indicates parallel evolutionary trends among bacterial mutualists of insects.</title>
        <authorList>
            <person name="Degnan P.H."/>
            <person name="Lazarus A.B."/>
            <person name="Wernegreen J.J."/>
        </authorList>
    </citation>
    <scope>NUCLEOTIDE SEQUENCE [LARGE SCALE GENOMIC DNA]</scope>
    <source>
        <strain>BPEN</strain>
    </source>
</reference>
<evidence type="ECO:0000255" key="1">
    <source>
        <dbReference type="HAMAP-Rule" id="MF_00683"/>
    </source>
</evidence>
<dbReference type="EMBL" id="CP000016">
    <property type="protein sequence ID" value="AAZ41091.1"/>
    <property type="molecule type" value="Genomic_DNA"/>
</dbReference>
<dbReference type="SMR" id="Q492K6"/>
<dbReference type="STRING" id="291272.BPEN_475"/>
<dbReference type="KEGG" id="bpn:BPEN_475"/>
<dbReference type="eggNOG" id="COG2926">
    <property type="taxonomic scope" value="Bacteria"/>
</dbReference>
<dbReference type="HOGENOM" id="CLU_153146_0_0_6"/>
<dbReference type="OrthoDB" id="90485at2"/>
<dbReference type="Proteomes" id="UP000007794">
    <property type="component" value="Chromosome"/>
</dbReference>
<dbReference type="GO" id="GO:0005829">
    <property type="term" value="C:cytosol"/>
    <property type="evidence" value="ECO:0007669"/>
    <property type="project" value="TreeGrafter"/>
</dbReference>
<dbReference type="HAMAP" id="MF_00683">
    <property type="entry name" value="Pole_loc_TmaR"/>
    <property type="match status" value="1"/>
</dbReference>
<dbReference type="InterPro" id="IPR007458">
    <property type="entry name" value="DUF496"/>
</dbReference>
<dbReference type="InterPro" id="IPR053375">
    <property type="entry name" value="UPF0265"/>
</dbReference>
<dbReference type="NCBIfam" id="NF003844">
    <property type="entry name" value="PRK05423.1"/>
    <property type="match status" value="1"/>
</dbReference>
<dbReference type="NCBIfam" id="NF040881">
    <property type="entry name" value="PTS_reg_TmaR"/>
    <property type="match status" value="1"/>
</dbReference>
<dbReference type="PANTHER" id="PTHR39591">
    <property type="entry name" value="UPF0265 PROTEIN YEEX"/>
    <property type="match status" value="1"/>
</dbReference>
<dbReference type="PANTHER" id="PTHR39591:SF1">
    <property type="entry name" value="UPF0265 PROTEIN YEEX"/>
    <property type="match status" value="1"/>
</dbReference>
<dbReference type="Pfam" id="PF04363">
    <property type="entry name" value="DUF496"/>
    <property type="match status" value="1"/>
</dbReference>
<dbReference type="PIRSF" id="PIRSF028773">
    <property type="entry name" value="UCP028773"/>
    <property type="match status" value="1"/>
</dbReference>
<name>TMAR_BLOPB</name>
<feature type="chain" id="PRO_1000061975" description="Pole-localizer protein TmaR">
    <location>
        <begin position="1"/>
        <end position="107"/>
    </location>
</feature>
<feature type="coiled-coil region" evidence="1">
    <location>
        <begin position="70"/>
        <end position="104"/>
    </location>
</feature>